<gene>
    <name evidence="1" type="primary">trpS</name>
    <name type="ordered locus">OB1208</name>
</gene>
<organism>
    <name type="scientific">Oceanobacillus iheyensis (strain DSM 14371 / CIP 107618 / JCM 11309 / KCTC 3954 / HTE831)</name>
    <dbReference type="NCBI Taxonomy" id="221109"/>
    <lineage>
        <taxon>Bacteria</taxon>
        <taxon>Bacillati</taxon>
        <taxon>Bacillota</taxon>
        <taxon>Bacilli</taxon>
        <taxon>Bacillales</taxon>
        <taxon>Bacillaceae</taxon>
        <taxon>Oceanobacillus</taxon>
    </lineage>
</organism>
<proteinExistence type="inferred from homology"/>
<evidence type="ECO:0000255" key="1">
    <source>
        <dbReference type="HAMAP-Rule" id="MF_00140"/>
    </source>
</evidence>
<reference key="1">
    <citation type="journal article" date="2002" name="Nucleic Acids Res.">
        <title>Genome sequence of Oceanobacillus iheyensis isolated from the Iheya Ridge and its unexpected adaptive capabilities to extreme environments.</title>
        <authorList>
            <person name="Takami H."/>
            <person name="Takaki Y."/>
            <person name="Uchiyama I."/>
        </authorList>
    </citation>
    <scope>NUCLEOTIDE SEQUENCE [LARGE SCALE GENOMIC DNA]</scope>
    <source>
        <strain>DSM 14371 / CIP 107618 / JCM 11309 / KCTC 3954 / HTE831</strain>
    </source>
</reference>
<protein>
    <recommendedName>
        <fullName evidence="1">Tryptophan--tRNA ligase</fullName>
        <ecNumber evidence="1">6.1.1.2</ecNumber>
    </recommendedName>
    <alternativeName>
        <fullName evidence="1">Tryptophanyl-tRNA synthetase</fullName>
        <shortName evidence="1">TrpRS</shortName>
    </alternativeName>
</protein>
<sequence>MKTIFSGIQPSGTLTLGNYLGAIQQFVELQNDYNCYFCIVDEHAITVPQDRLELRKNIKSLAALYIASGIDPDSSTLFIQSEVPEHTQLGWMLQSISYVGELERMTQYKDKSQGQEAISSALLTYPSLMAADILLYNTDVVPVGDDQKQHLELARNLAQRFNNRFNDIFTVPEVRIPKVGARIMSLQEPTKKMSKSDTNQKGFISMLDEPKRIEKKIKSAVTDSEGIVKFDKENKPGVSNLLTIYSSCTGESIADLEKKYDGKGYGDFKQGVANAVIDTLRPIQEKYEQLIQSDELDAILDQGRDKASFSAGKTIKKAKKAMGLGRK</sequence>
<comment type="function">
    <text evidence="1">Catalyzes the attachment of tryptophan to tRNA(Trp).</text>
</comment>
<comment type="catalytic activity">
    <reaction evidence="1">
        <text>tRNA(Trp) + L-tryptophan + ATP = L-tryptophyl-tRNA(Trp) + AMP + diphosphate + H(+)</text>
        <dbReference type="Rhea" id="RHEA:24080"/>
        <dbReference type="Rhea" id="RHEA-COMP:9671"/>
        <dbReference type="Rhea" id="RHEA-COMP:9705"/>
        <dbReference type="ChEBI" id="CHEBI:15378"/>
        <dbReference type="ChEBI" id="CHEBI:30616"/>
        <dbReference type="ChEBI" id="CHEBI:33019"/>
        <dbReference type="ChEBI" id="CHEBI:57912"/>
        <dbReference type="ChEBI" id="CHEBI:78442"/>
        <dbReference type="ChEBI" id="CHEBI:78535"/>
        <dbReference type="ChEBI" id="CHEBI:456215"/>
        <dbReference type="EC" id="6.1.1.2"/>
    </reaction>
</comment>
<comment type="subunit">
    <text evidence="1">Homodimer.</text>
</comment>
<comment type="subcellular location">
    <subcellularLocation>
        <location evidence="1">Cytoplasm</location>
    </subcellularLocation>
</comment>
<comment type="similarity">
    <text evidence="1">Belongs to the class-I aminoacyl-tRNA synthetase family.</text>
</comment>
<dbReference type="EC" id="6.1.1.2" evidence="1"/>
<dbReference type="EMBL" id="BA000028">
    <property type="protein sequence ID" value="BAC13164.1"/>
    <property type="molecule type" value="Genomic_DNA"/>
</dbReference>
<dbReference type="RefSeq" id="WP_011065607.1">
    <property type="nucleotide sequence ID" value="NC_004193.1"/>
</dbReference>
<dbReference type="SMR" id="Q8ERU2"/>
<dbReference type="STRING" id="221109.gene:10733447"/>
<dbReference type="KEGG" id="oih:OB1208"/>
<dbReference type="eggNOG" id="COG0180">
    <property type="taxonomic scope" value="Bacteria"/>
</dbReference>
<dbReference type="HOGENOM" id="CLU_029244_1_2_9"/>
<dbReference type="OrthoDB" id="9801042at2"/>
<dbReference type="PhylomeDB" id="Q8ERU2"/>
<dbReference type="Proteomes" id="UP000000822">
    <property type="component" value="Chromosome"/>
</dbReference>
<dbReference type="GO" id="GO:0005829">
    <property type="term" value="C:cytosol"/>
    <property type="evidence" value="ECO:0007669"/>
    <property type="project" value="TreeGrafter"/>
</dbReference>
<dbReference type="GO" id="GO:0005524">
    <property type="term" value="F:ATP binding"/>
    <property type="evidence" value="ECO:0007669"/>
    <property type="project" value="UniProtKB-UniRule"/>
</dbReference>
<dbReference type="GO" id="GO:0004830">
    <property type="term" value="F:tryptophan-tRNA ligase activity"/>
    <property type="evidence" value="ECO:0007669"/>
    <property type="project" value="UniProtKB-UniRule"/>
</dbReference>
<dbReference type="GO" id="GO:0006436">
    <property type="term" value="P:tryptophanyl-tRNA aminoacylation"/>
    <property type="evidence" value="ECO:0007669"/>
    <property type="project" value="UniProtKB-UniRule"/>
</dbReference>
<dbReference type="CDD" id="cd00806">
    <property type="entry name" value="TrpRS_core"/>
    <property type="match status" value="1"/>
</dbReference>
<dbReference type="FunFam" id="1.10.240.10:FF:000002">
    <property type="entry name" value="Tryptophan--tRNA ligase"/>
    <property type="match status" value="1"/>
</dbReference>
<dbReference type="Gene3D" id="3.40.50.620">
    <property type="entry name" value="HUPs"/>
    <property type="match status" value="1"/>
</dbReference>
<dbReference type="Gene3D" id="1.10.240.10">
    <property type="entry name" value="Tyrosyl-Transfer RNA Synthetase"/>
    <property type="match status" value="1"/>
</dbReference>
<dbReference type="HAMAP" id="MF_00140_B">
    <property type="entry name" value="Trp_tRNA_synth_B"/>
    <property type="match status" value="1"/>
</dbReference>
<dbReference type="InterPro" id="IPR001412">
    <property type="entry name" value="aa-tRNA-synth_I_CS"/>
</dbReference>
<dbReference type="InterPro" id="IPR002305">
    <property type="entry name" value="aa-tRNA-synth_Ic"/>
</dbReference>
<dbReference type="InterPro" id="IPR014729">
    <property type="entry name" value="Rossmann-like_a/b/a_fold"/>
</dbReference>
<dbReference type="InterPro" id="IPR002306">
    <property type="entry name" value="Trp-tRNA-ligase"/>
</dbReference>
<dbReference type="InterPro" id="IPR024109">
    <property type="entry name" value="Trp-tRNA-ligase_bac-type"/>
</dbReference>
<dbReference type="InterPro" id="IPR050203">
    <property type="entry name" value="Trp-tRNA_synthetase"/>
</dbReference>
<dbReference type="NCBIfam" id="TIGR00233">
    <property type="entry name" value="trpS"/>
    <property type="match status" value="1"/>
</dbReference>
<dbReference type="PANTHER" id="PTHR43766">
    <property type="entry name" value="TRYPTOPHAN--TRNA LIGASE, MITOCHONDRIAL"/>
    <property type="match status" value="1"/>
</dbReference>
<dbReference type="PANTHER" id="PTHR43766:SF1">
    <property type="entry name" value="TRYPTOPHAN--TRNA LIGASE, MITOCHONDRIAL"/>
    <property type="match status" value="1"/>
</dbReference>
<dbReference type="Pfam" id="PF00579">
    <property type="entry name" value="tRNA-synt_1b"/>
    <property type="match status" value="1"/>
</dbReference>
<dbReference type="PRINTS" id="PR01039">
    <property type="entry name" value="TRNASYNTHTRP"/>
</dbReference>
<dbReference type="SUPFAM" id="SSF52374">
    <property type="entry name" value="Nucleotidylyl transferase"/>
    <property type="match status" value="1"/>
</dbReference>
<dbReference type="PROSITE" id="PS00178">
    <property type="entry name" value="AA_TRNA_LIGASE_I"/>
    <property type="match status" value="1"/>
</dbReference>
<accession>Q8ERU2</accession>
<keyword id="KW-0030">Aminoacyl-tRNA synthetase</keyword>
<keyword id="KW-0067">ATP-binding</keyword>
<keyword id="KW-0963">Cytoplasm</keyword>
<keyword id="KW-0436">Ligase</keyword>
<keyword id="KW-0547">Nucleotide-binding</keyword>
<keyword id="KW-0648">Protein biosynthesis</keyword>
<keyword id="KW-1185">Reference proteome</keyword>
<name>SYW_OCEIH</name>
<feature type="chain" id="PRO_0000136655" description="Tryptophan--tRNA ligase">
    <location>
        <begin position="1"/>
        <end position="327"/>
    </location>
</feature>
<feature type="short sequence motif" description="'HIGH' region" evidence="1">
    <location>
        <begin position="10"/>
        <end position="18"/>
    </location>
</feature>
<feature type="short sequence motif" description="'KMSKS' region" evidence="1">
    <location>
        <begin position="192"/>
        <end position="196"/>
    </location>
</feature>
<feature type="binding site" evidence="1">
    <location>
        <begin position="9"/>
        <end position="11"/>
    </location>
    <ligand>
        <name>ATP</name>
        <dbReference type="ChEBI" id="CHEBI:30616"/>
    </ligand>
</feature>
<feature type="binding site" evidence="1">
    <location>
        <begin position="17"/>
        <end position="18"/>
    </location>
    <ligand>
        <name>ATP</name>
        <dbReference type="ChEBI" id="CHEBI:30616"/>
    </ligand>
</feature>
<feature type="binding site" evidence="1">
    <location>
        <position position="132"/>
    </location>
    <ligand>
        <name>L-tryptophan</name>
        <dbReference type="ChEBI" id="CHEBI:57912"/>
    </ligand>
</feature>
<feature type="binding site" evidence="1">
    <location>
        <begin position="144"/>
        <end position="146"/>
    </location>
    <ligand>
        <name>ATP</name>
        <dbReference type="ChEBI" id="CHEBI:30616"/>
    </ligand>
</feature>
<feature type="binding site" evidence="1">
    <location>
        <position position="183"/>
    </location>
    <ligand>
        <name>ATP</name>
        <dbReference type="ChEBI" id="CHEBI:30616"/>
    </ligand>
</feature>
<feature type="binding site" evidence="1">
    <location>
        <begin position="192"/>
        <end position="196"/>
    </location>
    <ligand>
        <name>ATP</name>
        <dbReference type="ChEBI" id="CHEBI:30616"/>
    </ligand>
</feature>